<organism>
    <name type="scientific">Mus musculus</name>
    <name type="common">Mouse</name>
    <dbReference type="NCBI Taxonomy" id="10090"/>
    <lineage>
        <taxon>Eukaryota</taxon>
        <taxon>Metazoa</taxon>
        <taxon>Chordata</taxon>
        <taxon>Craniata</taxon>
        <taxon>Vertebrata</taxon>
        <taxon>Euteleostomi</taxon>
        <taxon>Mammalia</taxon>
        <taxon>Eutheria</taxon>
        <taxon>Euarchontoglires</taxon>
        <taxon>Glires</taxon>
        <taxon>Rodentia</taxon>
        <taxon>Myomorpha</taxon>
        <taxon>Muroidea</taxon>
        <taxon>Muridae</taxon>
        <taxon>Murinae</taxon>
        <taxon>Mus</taxon>
        <taxon>Mus</taxon>
    </lineage>
</organism>
<dbReference type="EMBL" id="D38580">
    <property type="protein sequence ID" value="BAA07581.1"/>
    <property type="status" value="ALT_INIT"/>
    <property type="molecule type" value="mRNA"/>
</dbReference>
<dbReference type="CCDS" id="CCDS15790.1"/>
<dbReference type="PIR" id="S51802">
    <property type="entry name" value="S51802"/>
</dbReference>
<dbReference type="RefSeq" id="NP_034824.2">
    <property type="nucleotide sequence ID" value="NM_010694.2"/>
</dbReference>
<dbReference type="SMR" id="Q62471"/>
<dbReference type="FunCoup" id="Q62471">
    <property type="interactions" value="51"/>
</dbReference>
<dbReference type="STRING" id="10090.ENSMUSP00000028304"/>
<dbReference type="GlyCosmos" id="Q62471">
    <property type="glycosylation" value="1 site, No reported glycans"/>
</dbReference>
<dbReference type="GlyGen" id="Q62471">
    <property type="glycosylation" value="1 site"/>
</dbReference>
<dbReference type="PaxDb" id="10090-ENSMUSP00000028304"/>
<dbReference type="ProteomicsDB" id="297609"/>
<dbReference type="DNASU" id="16820"/>
<dbReference type="Ensembl" id="ENSMUST00000239498.2">
    <property type="protein sequence ID" value="ENSMUSP00000159300.2"/>
    <property type="gene ID" value="ENSMUSG00000026936.5"/>
</dbReference>
<dbReference type="GeneID" id="16820"/>
<dbReference type="KEGG" id="mmu:16820"/>
<dbReference type="AGR" id="MGI:102669"/>
<dbReference type="CTD" id="16820"/>
<dbReference type="MGI" id="MGI:102669">
    <property type="gene designation" value="Lcn3"/>
</dbReference>
<dbReference type="VEuPathDB" id="HostDB:ENSMUSG00000026936"/>
<dbReference type="eggNOG" id="ENOG502S22P">
    <property type="taxonomic scope" value="Eukaryota"/>
</dbReference>
<dbReference type="GeneTree" id="ENSGT01050000244868"/>
<dbReference type="InParanoid" id="Q62471"/>
<dbReference type="OrthoDB" id="9447591at2759"/>
<dbReference type="BioGRID-ORCS" id="16820">
    <property type="hits" value="2 hits in 78 CRISPR screens"/>
</dbReference>
<dbReference type="PRO" id="PR:Q62471"/>
<dbReference type="Proteomes" id="UP000000589">
    <property type="component" value="Chromosome 2"/>
</dbReference>
<dbReference type="RNAct" id="Q62471">
    <property type="molecule type" value="protein"/>
</dbReference>
<dbReference type="Bgee" id="ENSMUSG00000026936">
    <property type="expression patterns" value="Expressed in olfactory epithelium and 18 other cell types or tissues"/>
</dbReference>
<dbReference type="ExpressionAtlas" id="Q62471">
    <property type="expression patterns" value="baseline and differential"/>
</dbReference>
<dbReference type="GO" id="GO:0005576">
    <property type="term" value="C:extracellular region"/>
    <property type="evidence" value="ECO:0007669"/>
    <property type="project" value="UniProtKB-SubCell"/>
</dbReference>
<dbReference type="GO" id="GO:0042802">
    <property type="term" value="F:identical protein binding"/>
    <property type="evidence" value="ECO:0000314"/>
    <property type="project" value="MGI"/>
</dbReference>
<dbReference type="GO" id="GO:0005550">
    <property type="term" value="F:pheromone binding"/>
    <property type="evidence" value="ECO:0007669"/>
    <property type="project" value="UniProtKB-KW"/>
</dbReference>
<dbReference type="GO" id="GO:0036094">
    <property type="term" value="F:small molecule binding"/>
    <property type="evidence" value="ECO:0007669"/>
    <property type="project" value="InterPro"/>
</dbReference>
<dbReference type="CDD" id="cd19414">
    <property type="entry name" value="lipocalin_1_3_4_13-like"/>
    <property type="match status" value="1"/>
</dbReference>
<dbReference type="Gene3D" id="2.40.128.20">
    <property type="match status" value="1"/>
</dbReference>
<dbReference type="InterPro" id="IPR012674">
    <property type="entry name" value="Calycin"/>
</dbReference>
<dbReference type="InterPro" id="IPR002345">
    <property type="entry name" value="Lipocalin"/>
</dbReference>
<dbReference type="InterPro" id="IPR000566">
    <property type="entry name" value="Lipocln_cytosolic_FA-bd_dom"/>
</dbReference>
<dbReference type="InterPro" id="IPR002450">
    <property type="entry name" value="von_Ebner_gland"/>
</dbReference>
<dbReference type="PANTHER" id="PTHR11430">
    <property type="entry name" value="LIPOCALIN"/>
    <property type="match status" value="1"/>
</dbReference>
<dbReference type="PANTHER" id="PTHR11430:SF4">
    <property type="entry name" value="VOMERONASAL SECRETORY PROTEIN 1"/>
    <property type="match status" value="1"/>
</dbReference>
<dbReference type="Pfam" id="PF00061">
    <property type="entry name" value="Lipocalin"/>
    <property type="match status" value="1"/>
</dbReference>
<dbReference type="PRINTS" id="PR01175">
    <property type="entry name" value="VNEBNERGLAND"/>
</dbReference>
<dbReference type="SUPFAM" id="SSF50814">
    <property type="entry name" value="Lipocalins"/>
    <property type="match status" value="1"/>
</dbReference>
<sequence length="182" mass="20626">MRALLLIISFCLVAVLQAQDSSFLAFNNGNFSGKWFLKALVSEDDIPINKVSPMLILVLNNGDIELSITHMIYDQCLEVTTILEKTDVPGQYLAFEGKTHLQVQLSSVKGHYMLYCDGEIEGMRFLMTQLIGRDPQENLEALEEFKVFTQIKGLVAENLVILEQMEKCEPESFYELPSRPSE</sequence>
<name>VNS1_MOUSE</name>
<accession>Q62471</accession>
<protein>
    <recommendedName>
        <fullName>Vomeronasal secretory protein 1</fullName>
    </recommendedName>
    <alternativeName>
        <fullName>Lipocalin-3</fullName>
    </alternativeName>
    <alternativeName>
        <fullName>Vomeronasal secretory protein I</fullName>
        <shortName>VNSP I</shortName>
    </alternativeName>
</protein>
<keyword id="KW-1015">Disulfide bond</keyword>
<keyword id="KW-0325">Glycoprotein</keyword>
<keyword id="KW-0590">Pheromone-binding</keyword>
<keyword id="KW-1185">Reference proteome</keyword>
<keyword id="KW-0964">Secreted</keyword>
<keyword id="KW-0732">Signal</keyword>
<keyword id="KW-0813">Transport</keyword>
<proteinExistence type="evidence at transcript level"/>
<reference key="1">
    <citation type="journal article" date="1994" name="EMBO J.">
        <title>Possible pheromone-carrier function of two lipocalin proteins in the vomeronasal organ.</title>
        <authorList>
            <person name="Miyawaki A."/>
            <person name="Matsushita F."/>
            <person name="Ryo Y."/>
            <person name="Mikoshiba K."/>
        </authorList>
    </citation>
    <scope>NUCLEOTIDE SEQUENCE [MRNA]</scope>
    <source>
        <strain>ddY</strain>
    </source>
</reference>
<comment type="function">
    <text>Transport of lipophilic molecules, possible pheromone-carrier.</text>
</comment>
<comment type="subcellular location">
    <subcellularLocation>
        <location>Secreted</location>
    </subcellularLocation>
</comment>
<comment type="tissue specificity">
    <text>Specifically expressed in vomeronasal and posterior glands of the nasal septum, the ducts of which open into the lumen of the vomeronasal organ.</text>
</comment>
<comment type="similarity">
    <text evidence="3">Belongs to the calycin superfamily. Lipocalin family.</text>
</comment>
<comment type="sequence caution" evidence="3">
    <conflict type="erroneous initiation">
        <sequence resource="EMBL-CDS" id="BAA07581"/>
    </conflict>
</comment>
<evidence type="ECO:0000250" key="1"/>
<evidence type="ECO:0000255" key="2"/>
<evidence type="ECO:0000305" key="3"/>
<gene>
    <name type="primary">Lcn3</name>
</gene>
<feature type="signal peptide" evidence="2">
    <location>
        <begin position="1"/>
        <end position="18"/>
    </location>
</feature>
<feature type="chain" id="PRO_0000017978" description="Vomeronasal secretory protein 1">
    <location>
        <begin position="19"/>
        <end position="182"/>
    </location>
</feature>
<feature type="glycosylation site" description="N-linked (GlcNAc...) asparagine" evidence="2">
    <location>
        <position position="30"/>
    </location>
</feature>
<feature type="disulfide bond" evidence="1">
    <location>
        <begin position="76"/>
        <end position="168"/>
    </location>
</feature>